<accession>Q6DEU3</accession>
<proteinExistence type="evidence at transcript level"/>
<keyword id="KW-0963">Cytoplasm</keyword>
<keyword id="KW-0967">Endosome</keyword>
<keyword id="KW-0472">Membrane</keyword>
<keyword id="KW-0479">Metal-binding</keyword>
<keyword id="KW-0653">Protein transport</keyword>
<keyword id="KW-1185">Reference proteome</keyword>
<keyword id="KW-0813">Transport</keyword>
<keyword id="KW-0862">Zinc</keyword>
<gene>
    <name type="primary">vps29</name>
    <name type="ORF">TEgg117a01.1</name>
</gene>
<comment type="function">
    <text evidence="2">Component of the commander complex that is essential for endosomal recycling of transmembrane cargos; the commander complex is composed of the CCC subcomplex and the retriever subcomplex (By similarity). Component of the retriever complex, which is a heterotrimeric complex related to retromer cargo-selective complex (CSC) and essential for retromer-independent retrieval and recycling of numerous cargos (By similarity). Component of the retromer cargo-selective complex (CSC). The CSC is believed to be the core functional component of retromer or respective retromer complex variants acting to prevent missorting of selected transmembrane cargo proteins into the lysosomal degradation pathway. In the endosomes, retriever complex drives the retrieval and recycling of NxxY-motif-containing cargo proteins by coupling to snx17, a cargo essential for the homeostatic maintenance of numerous cell surface proteins associated with processes that include cell migration, cell adhesion, nutrient supply and cell signaling (By similarity). The recruitment of the retriever complex to the endosomal membrane involves CCC and WASH complexes (By similarity).</text>
</comment>
<comment type="subunit">
    <text evidence="2">Component of the commander complex consisting of the CCC subcomplex and the retriever subcomplex (By similarity). Component of the heterotrimeric retriever complex formed by vps26c, vps29 and vps35l; within the complex interacts with vps35l (By similarity). Component of the heterotrimeric retromer cargo-selective complex (CSC), also described as vacuolar protein sorting subcomplex (VPS), formed by vps26 (vps26a or vps26b), vps29 and vps35 (By similarity). The CSC has a highly elongated structure with vps26 and vps29 binding independently at opposite distal ends of vps35 as central platform (By similarity).</text>
</comment>
<comment type="subcellular location">
    <subcellularLocation>
        <location>Cytoplasm</location>
    </subcellularLocation>
    <subcellularLocation>
        <location>Membrane</location>
        <topology>Peripheral membrane protein</topology>
    </subcellularLocation>
    <subcellularLocation>
        <location evidence="1">Endosome membrane</location>
        <topology evidence="1">Peripheral membrane protein</topology>
    </subcellularLocation>
</comment>
<comment type="similarity">
    <text evidence="3">Belongs to the VPS29 family.</text>
</comment>
<organism>
    <name type="scientific">Xenopus tropicalis</name>
    <name type="common">Western clawed frog</name>
    <name type="synonym">Silurana tropicalis</name>
    <dbReference type="NCBI Taxonomy" id="8364"/>
    <lineage>
        <taxon>Eukaryota</taxon>
        <taxon>Metazoa</taxon>
        <taxon>Chordata</taxon>
        <taxon>Craniata</taxon>
        <taxon>Vertebrata</taxon>
        <taxon>Euteleostomi</taxon>
        <taxon>Amphibia</taxon>
        <taxon>Batrachia</taxon>
        <taxon>Anura</taxon>
        <taxon>Pipoidea</taxon>
        <taxon>Pipidae</taxon>
        <taxon>Xenopodinae</taxon>
        <taxon>Xenopus</taxon>
        <taxon>Silurana</taxon>
    </lineage>
</organism>
<evidence type="ECO:0000250" key="1">
    <source>
        <dbReference type="UniProtKB" id="Q9QZ88"/>
    </source>
</evidence>
<evidence type="ECO:0000250" key="2">
    <source>
        <dbReference type="UniProtKB" id="Q9UBQ0"/>
    </source>
</evidence>
<evidence type="ECO:0000305" key="3"/>
<reference key="1">
    <citation type="submission" date="2006-10" db="EMBL/GenBank/DDBJ databases">
        <authorList>
            <consortium name="Sanger Xenopus tropicalis EST/cDNA project"/>
        </authorList>
    </citation>
    <scope>NUCLEOTIDE SEQUENCE [LARGE SCALE MRNA]</scope>
    <source>
        <tissue>Egg</tissue>
    </source>
</reference>
<reference key="2">
    <citation type="submission" date="2004-07" db="EMBL/GenBank/DDBJ databases">
        <authorList>
            <consortium name="NIH - Xenopus Gene Collection (XGC) project"/>
        </authorList>
    </citation>
    <scope>NUCLEOTIDE SEQUENCE [LARGE SCALE MRNA]</scope>
    <source>
        <tissue>Embryo</tissue>
    </source>
</reference>
<protein>
    <recommendedName>
        <fullName>Vacuolar protein sorting-associated protein 29</fullName>
    </recommendedName>
    <alternativeName>
        <fullName>Vesicle protein sorting 29</fullName>
    </alternativeName>
</protein>
<feature type="chain" id="PRO_0000339653" description="Vacuolar protein sorting-associated protein 29">
    <location>
        <begin position="1"/>
        <end position="182"/>
    </location>
</feature>
<dbReference type="EMBL" id="CR761433">
    <property type="protein sequence ID" value="CAJ82280.1"/>
    <property type="molecule type" value="mRNA"/>
</dbReference>
<dbReference type="EMBL" id="BC077001">
    <property type="protein sequence ID" value="AAH77001.1"/>
    <property type="molecule type" value="mRNA"/>
</dbReference>
<dbReference type="RefSeq" id="NP_001005079.1">
    <property type="nucleotide sequence ID" value="NM_001005079.2"/>
</dbReference>
<dbReference type="SMR" id="Q6DEU3"/>
<dbReference type="FunCoup" id="Q6DEU3">
    <property type="interactions" value="3750"/>
</dbReference>
<dbReference type="STRING" id="8364.ENSXETP00000037461"/>
<dbReference type="PaxDb" id="8364-ENSXETP00000052892"/>
<dbReference type="DNASU" id="448654"/>
<dbReference type="GeneID" id="448654"/>
<dbReference type="KEGG" id="xtr:448654"/>
<dbReference type="AGR" id="Xenbase:XB-GENE-967952"/>
<dbReference type="CTD" id="51699"/>
<dbReference type="Xenbase" id="XB-GENE-967952">
    <property type="gene designation" value="vps29"/>
</dbReference>
<dbReference type="eggNOG" id="KOG3325">
    <property type="taxonomic scope" value="Eukaryota"/>
</dbReference>
<dbReference type="InParanoid" id="Q6DEU3"/>
<dbReference type="OrthoDB" id="10258130at2759"/>
<dbReference type="Reactome" id="R-XTR-3238698">
    <property type="pathway name" value="WNT ligand biogenesis and trafficking"/>
</dbReference>
<dbReference type="Proteomes" id="UP000008143">
    <property type="component" value="Chromosome 1"/>
</dbReference>
<dbReference type="Bgee" id="ENSXETG00000024476">
    <property type="expression patterns" value="Expressed in brain and 16 other cell types or tissues"/>
</dbReference>
<dbReference type="GO" id="GO:0005829">
    <property type="term" value="C:cytosol"/>
    <property type="evidence" value="ECO:0007669"/>
    <property type="project" value="GOC"/>
</dbReference>
<dbReference type="GO" id="GO:0010008">
    <property type="term" value="C:endosome membrane"/>
    <property type="evidence" value="ECO:0007669"/>
    <property type="project" value="UniProtKB-SubCell"/>
</dbReference>
<dbReference type="GO" id="GO:0030904">
    <property type="term" value="C:retromer complex"/>
    <property type="evidence" value="ECO:0000250"/>
    <property type="project" value="UniProtKB"/>
</dbReference>
<dbReference type="GO" id="GO:0046872">
    <property type="term" value="F:metal ion binding"/>
    <property type="evidence" value="ECO:0007669"/>
    <property type="project" value="UniProtKB-KW"/>
</dbReference>
<dbReference type="GO" id="GO:0032456">
    <property type="term" value="P:endocytic recycling"/>
    <property type="evidence" value="ECO:0000250"/>
    <property type="project" value="UniProtKB"/>
</dbReference>
<dbReference type="GO" id="GO:0015031">
    <property type="term" value="P:protein transport"/>
    <property type="evidence" value="ECO:0007669"/>
    <property type="project" value="UniProtKB-KW"/>
</dbReference>
<dbReference type="GO" id="GO:0042147">
    <property type="term" value="P:retrograde transport, endosome to Golgi"/>
    <property type="evidence" value="ECO:0007669"/>
    <property type="project" value="InterPro"/>
</dbReference>
<dbReference type="CDD" id="cd07394">
    <property type="entry name" value="MPP_Vps29"/>
    <property type="match status" value="1"/>
</dbReference>
<dbReference type="FunFam" id="3.60.21.10:FF:000009">
    <property type="entry name" value="Vacuolar protein sorting-associated protein 29"/>
    <property type="match status" value="1"/>
</dbReference>
<dbReference type="Gene3D" id="3.60.21.10">
    <property type="match status" value="1"/>
</dbReference>
<dbReference type="InterPro" id="IPR024654">
    <property type="entry name" value="Calcineurin-like_PHP_lpxH"/>
</dbReference>
<dbReference type="InterPro" id="IPR029052">
    <property type="entry name" value="Metallo-depent_PP-like"/>
</dbReference>
<dbReference type="InterPro" id="IPR000979">
    <property type="entry name" value="Phosphodiesterase_MJ0936/Vps29"/>
</dbReference>
<dbReference type="InterPro" id="IPR028661">
    <property type="entry name" value="Vps29"/>
</dbReference>
<dbReference type="NCBIfam" id="TIGR00040">
    <property type="entry name" value="yfcE"/>
    <property type="match status" value="1"/>
</dbReference>
<dbReference type="PANTHER" id="PTHR11124">
    <property type="entry name" value="VACUOLAR SORTING PROTEIN VPS29"/>
    <property type="match status" value="1"/>
</dbReference>
<dbReference type="Pfam" id="PF12850">
    <property type="entry name" value="Metallophos_2"/>
    <property type="match status" value="1"/>
</dbReference>
<dbReference type="SUPFAM" id="SSF56300">
    <property type="entry name" value="Metallo-dependent phosphatases"/>
    <property type="match status" value="1"/>
</dbReference>
<name>VPS29_XENTR</name>
<sequence>MLVLVLGDLHIPHRCNSLPAKFKKLLVPGKIQHILCTGNLCTKESFDYLKTLAGDVHIVRGDFDENLNYPEQKVVTVGQFKIGLIHGHQVIPWGDMASLALLQRQLDVDILISGHTQKFEAFEHENKFYINPGSATGAYNALENNIIPSFVLMDIQASTVVTYVYQLIGDDVKVERIEYKKS</sequence>